<organism>
    <name type="scientific">Mesostigma viride</name>
    <name type="common">Green alga</name>
    <dbReference type="NCBI Taxonomy" id="41882"/>
    <lineage>
        <taxon>Eukaryota</taxon>
        <taxon>Viridiplantae</taxon>
        <taxon>Streptophyta</taxon>
        <taxon>Mesostigmatophyceae</taxon>
        <taxon>Mesostigmatales</taxon>
        <taxon>Mesostigmataceae</taxon>
        <taxon>Mesostigma</taxon>
    </lineage>
</organism>
<comment type="subunit">
    <text evidence="1">Part of the 30S ribosomal subunit.</text>
</comment>
<comment type="subcellular location">
    <subcellularLocation>
        <location>Plastid</location>
        <location>Chloroplast</location>
    </subcellularLocation>
</comment>
<comment type="similarity">
    <text evidence="2">Belongs to the universal ribosomal protein uS3 family.</text>
</comment>
<accession>Q9MUU2</accession>
<name>RR3_MESVI</name>
<reference key="1">
    <citation type="journal article" date="2000" name="Nature">
        <title>Ancestral chloroplast genome in Mesostigma viride reveals an early branch of green plant evolution.</title>
        <authorList>
            <person name="Lemieux C."/>
            <person name="Otis C."/>
            <person name="Turmel M."/>
        </authorList>
    </citation>
    <scope>NUCLEOTIDE SEQUENCE [LARGE SCALE GENOMIC DNA]</scope>
    <source>
        <strain>NIES-296 / KY-14 / CCMP 2046</strain>
    </source>
</reference>
<feature type="chain" id="PRO_0000130289" description="Small ribosomal subunit protein uS3c">
    <location>
        <begin position="1"/>
        <end position="213"/>
    </location>
</feature>
<feature type="domain" description="KH type-2">
    <location>
        <begin position="39"/>
        <end position="109"/>
    </location>
</feature>
<geneLocation type="chloroplast"/>
<proteinExistence type="inferred from homology"/>
<keyword id="KW-0150">Chloroplast</keyword>
<keyword id="KW-0934">Plastid</keyword>
<keyword id="KW-0687">Ribonucleoprotein</keyword>
<keyword id="KW-0689">Ribosomal protein</keyword>
<keyword id="KW-0694">RNA-binding</keyword>
<keyword id="KW-0699">rRNA-binding</keyword>
<sequence length="213" mass="24545">MGQKIHPLGFRLGVTQEHRAHWFAKPSEYKFLVEEDNYIRKYLNAKLANAGVARIDIQRKADQVEIEIYTARPGLVVGRTGKGIENLIRDLQDKLRNKRKFRITITYLQEPDLESTLIGEFIAQRLQERKPFRRAIRQAVQRAKRAGVQGIKIQVAGRLNGAEIARSEWVREGRVPLQTLRADIDYSHCQAKTIYGIIGIKVWIFKGEKISIN</sequence>
<dbReference type="EMBL" id="AF166114">
    <property type="protein sequence ID" value="AAF43809.1"/>
    <property type="molecule type" value="Genomic_DNA"/>
</dbReference>
<dbReference type="RefSeq" id="NP_038368.1">
    <property type="nucleotide sequence ID" value="NC_002186.1"/>
</dbReference>
<dbReference type="SMR" id="Q9MUU2"/>
<dbReference type="GeneID" id="800860"/>
<dbReference type="GO" id="GO:0009507">
    <property type="term" value="C:chloroplast"/>
    <property type="evidence" value="ECO:0007669"/>
    <property type="project" value="UniProtKB-SubCell"/>
</dbReference>
<dbReference type="GO" id="GO:0022627">
    <property type="term" value="C:cytosolic small ribosomal subunit"/>
    <property type="evidence" value="ECO:0007669"/>
    <property type="project" value="TreeGrafter"/>
</dbReference>
<dbReference type="GO" id="GO:0019843">
    <property type="term" value="F:rRNA binding"/>
    <property type="evidence" value="ECO:0007669"/>
    <property type="project" value="UniProtKB-UniRule"/>
</dbReference>
<dbReference type="GO" id="GO:0003735">
    <property type="term" value="F:structural constituent of ribosome"/>
    <property type="evidence" value="ECO:0007669"/>
    <property type="project" value="InterPro"/>
</dbReference>
<dbReference type="GO" id="GO:0006412">
    <property type="term" value="P:translation"/>
    <property type="evidence" value="ECO:0007669"/>
    <property type="project" value="UniProtKB-UniRule"/>
</dbReference>
<dbReference type="CDD" id="cd02412">
    <property type="entry name" value="KH-II_30S_S3"/>
    <property type="match status" value="1"/>
</dbReference>
<dbReference type="FunFam" id="3.30.300.20:FF:000001">
    <property type="entry name" value="30S ribosomal protein S3"/>
    <property type="match status" value="1"/>
</dbReference>
<dbReference type="Gene3D" id="3.30.300.20">
    <property type="match status" value="1"/>
</dbReference>
<dbReference type="Gene3D" id="3.30.1140.32">
    <property type="entry name" value="Ribosomal protein S3, C-terminal domain"/>
    <property type="match status" value="1"/>
</dbReference>
<dbReference type="HAMAP" id="MF_01309_B">
    <property type="entry name" value="Ribosomal_uS3_B"/>
    <property type="match status" value="1"/>
</dbReference>
<dbReference type="InterPro" id="IPR015946">
    <property type="entry name" value="KH_dom-like_a/b"/>
</dbReference>
<dbReference type="InterPro" id="IPR004044">
    <property type="entry name" value="KH_dom_type_2"/>
</dbReference>
<dbReference type="InterPro" id="IPR009019">
    <property type="entry name" value="KH_sf_prok-type"/>
</dbReference>
<dbReference type="InterPro" id="IPR036419">
    <property type="entry name" value="Ribosomal_S3_C_sf"/>
</dbReference>
<dbReference type="InterPro" id="IPR005704">
    <property type="entry name" value="Ribosomal_uS3_bac-typ"/>
</dbReference>
<dbReference type="InterPro" id="IPR001351">
    <property type="entry name" value="Ribosomal_uS3_C"/>
</dbReference>
<dbReference type="InterPro" id="IPR018280">
    <property type="entry name" value="Ribosomal_uS3_CS"/>
</dbReference>
<dbReference type="NCBIfam" id="TIGR01009">
    <property type="entry name" value="rpsC_bact"/>
    <property type="match status" value="1"/>
</dbReference>
<dbReference type="PANTHER" id="PTHR11760">
    <property type="entry name" value="30S/40S RIBOSOMAL PROTEIN S3"/>
    <property type="match status" value="1"/>
</dbReference>
<dbReference type="PANTHER" id="PTHR11760:SF19">
    <property type="entry name" value="SMALL RIBOSOMAL SUBUNIT PROTEIN US3C"/>
    <property type="match status" value="1"/>
</dbReference>
<dbReference type="Pfam" id="PF07650">
    <property type="entry name" value="KH_2"/>
    <property type="match status" value="1"/>
</dbReference>
<dbReference type="Pfam" id="PF00189">
    <property type="entry name" value="Ribosomal_S3_C"/>
    <property type="match status" value="1"/>
</dbReference>
<dbReference type="SUPFAM" id="SSF54814">
    <property type="entry name" value="Prokaryotic type KH domain (KH-domain type II)"/>
    <property type="match status" value="1"/>
</dbReference>
<dbReference type="SUPFAM" id="SSF54821">
    <property type="entry name" value="Ribosomal protein S3 C-terminal domain"/>
    <property type="match status" value="1"/>
</dbReference>
<dbReference type="PROSITE" id="PS50823">
    <property type="entry name" value="KH_TYPE_2"/>
    <property type="match status" value="1"/>
</dbReference>
<dbReference type="PROSITE" id="PS00548">
    <property type="entry name" value="RIBOSOMAL_S3"/>
    <property type="match status" value="1"/>
</dbReference>
<protein>
    <recommendedName>
        <fullName evidence="2">Small ribosomal subunit protein uS3c</fullName>
    </recommendedName>
    <alternativeName>
        <fullName>30S ribosomal protein S3, chloroplastic</fullName>
    </alternativeName>
</protein>
<gene>
    <name type="primary">rps3</name>
</gene>
<evidence type="ECO:0000250" key="1"/>
<evidence type="ECO:0000305" key="2"/>